<proteinExistence type="inferred from homology"/>
<keyword id="KW-0067">ATP-binding</keyword>
<keyword id="KW-0963">Cytoplasm</keyword>
<keyword id="KW-0418">Kinase</keyword>
<keyword id="KW-0545">Nucleotide biosynthesis</keyword>
<keyword id="KW-0547">Nucleotide-binding</keyword>
<keyword id="KW-1185">Reference proteome</keyword>
<keyword id="KW-0808">Transferase</keyword>
<sequence>MNLLIMGLPGAGKGTQAAKIVEEFGVIHISTGDMFRAAMANQTEMGLLAKSYIDKGDLVPDEVTNGIVKERLSQDDIKEKGFLLDGYPRTIDQAHALDATLADLGLKLNGVVNIDVDPNSLVERLSGRIIHKKTGETFHKIFNPPAGDYDENDYYQREDDKPETVKRRLDVNIAQGQPIIDHYRKSGIVHDIQGNQEISEVFVDIKKVIESLA</sequence>
<accession>B9DSX1</accession>
<reference key="1">
    <citation type="journal article" date="2009" name="BMC Genomics">
        <title>Evidence for niche adaptation in the genome of the bovine pathogen Streptococcus uberis.</title>
        <authorList>
            <person name="Ward P.N."/>
            <person name="Holden M.T.G."/>
            <person name="Leigh J.A."/>
            <person name="Lennard N."/>
            <person name="Bignell A."/>
            <person name="Barron A."/>
            <person name="Clark L."/>
            <person name="Quail M.A."/>
            <person name="Woodward J."/>
            <person name="Barrell B.G."/>
            <person name="Egan S.A."/>
            <person name="Field T.R."/>
            <person name="Maskell D."/>
            <person name="Kehoe M."/>
            <person name="Dowson C.G."/>
            <person name="Chanter N."/>
            <person name="Whatmore A.M."/>
            <person name="Bentley S.D."/>
            <person name="Parkhill J."/>
        </authorList>
    </citation>
    <scope>NUCLEOTIDE SEQUENCE [LARGE SCALE GENOMIC DNA]</scope>
    <source>
        <strain>ATCC BAA-854 / 0140J</strain>
    </source>
</reference>
<gene>
    <name evidence="1" type="primary">adk</name>
    <name type="ordered locus">SUB0089</name>
</gene>
<evidence type="ECO:0000255" key="1">
    <source>
        <dbReference type="HAMAP-Rule" id="MF_00235"/>
    </source>
</evidence>
<name>KAD_STRU0</name>
<comment type="function">
    <text evidence="1">Catalyzes the reversible transfer of the terminal phosphate group between ATP and AMP. Plays an important role in cellular energy homeostasis and in adenine nucleotide metabolism.</text>
</comment>
<comment type="catalytic activity">
    <reaction evidence="1">
        <text>AMP + ATP = 2 ADP</text>
        <dbReference type="Rhea" id="RHEA:12973"/>
        <dbReference type="ChEBI" id="CHEBI:30616"/>
        <dbReference type="ChEBI" id="CHEBI:456215"/>
        <dbReference type="ChEBI" id="CHEBI:456216"/>
        <dbReference type="EC" id="2.7.4.3"/>
    </reaction>
</comment>
<comment type="pathway">
    <text evidence="1">Purine metabolism; AMP biosynthesis via salvage pathway; AMP from ADP: step 1/1.</text>
</comment>
<comment type="subunit">
    <text evidence="1">Monomer.</text>
</comment>
<comment type="subcellular location">
    <subcellularLocation>
        <location evidence="1">Cytoplasm</location>
    </subcellularLocation>
</comment>
<comment type="domain">
    <text evidence="1">Consists of three domains, a large central CORE domain and two small peripheral domains, NMPbind and LID, which undergo movements during catalysis. The LID domain closes over the site of phosphoryl transfer upon ATP binding. Assembling and dissambling the active center during each catalytic cycle provides an effective means to prevent ATP hydrolysis.</text>
</comment>
<comment type="similarity">
    <text evidence="1">Belongs to the adenylate kinase family.</text>
</comment>
<organism>
    <name type="scientific">Streptococcus uberis (strain ATCC BAA-854 / 0140J)</name>
    <dbReference type="NCBI Taxonomy" id="218495"/>
    <lineage>
        <taxon>Bacteria</taxon>
        <taxon>Bacillati</taxon>
        <taxon>Bacillota</taxon>
        <taxon>Bacilli</taxon>
        <taxon>Lactobacillales</taxon>
        <taxon>Streptococcaceae</taxon>
        <taxon>Streptococcus</taxon>
    </lineage>
</organism>
<feature type="chain" id="PRO_1000191171" description="Adenylate kinase">
    <location>
        <begin position="1"/>
        <end position="213"/>
    </location>
</feature>
<feature type="region of interest" description="NMP" evidence="1">
    <location>
        <begin position="30"/>
        <end position="59"/>
    </location>
</feature>
<feature type="region of interest" description="LID" evidence="1">
    <location>
        <begin position="127"/>
        <end position="160"/>
    </location>
</feature>
<feature type="binding site" evidence="1">
    <location>
        <begin position="10"/>
        <end position="15"/>
    </location>
    <ligand>
        <name>ATP</name>
        <dbReference type="ChEBI" id="CHEBI:30616"/>
    </ligand>
</feature>
<feature type="binding site" evidence="1">
    <location>
        <position position="31"/>
    </location>
    <ligand>
        <name>AMP</name>
        <dbReference type="ChEBI" id="CHEBI:456215"/>
    </ligand>
</feature>
<feature type="binding site" evidence="1">
    <location>
        <position position="36"/>
    </location>
    <ligand>
        <name>AMP</name>
        <dbReference type="ChEBI" id="CHEBI:456215"/>
    </ligand>
</feature>
<feature type="binding site" evidence="1">
    <location>
        <begin position="57"/>
        <end position="59"/>
    </location>
    <ligand>
        <name>AMP</name>
        <dbReference type="ChEBI" id="CHEBI:456215"/>
    </ligand>
</feature>
<feature type="binding site" evidence="1">
    <location>
        <begin position="86"/>
        <end position="89"/>
    </location>
    <ligand>
        <name>AMP</name>
        <dbReference type="ChEBI" id="CHEBI:456215"/>
    </ligand>
</feature>
<feature type="binding site" evidence="1">
    <location>
        <position position="93"/>
    </location>
    <ligand>
        <name>AMP</name>
        <dbReference type="ChEBI" id="CHEBI:456215"/>
    </ligand>
</feature>
<feature type="binding site" evidence="1">
    <location>
        <position position="128"/>
    </location>
    <ligand>
        <name>ATP</name>
        <dbReference type="ChEBI" id="CHEBI:30616"/>
    </ligand>
</feature>
<feature type="binding site" evidence="1">
    <location>
        <begin position="137"/>
        <end position="138"/>
    </location>
    <ligand>
        <name>ATP</name>
        <dbReference type="ChEBI" id="CHEBI:30616"/>
    </ligand>
</feature>
<feature type="binding site" evidence="1">
    <location>
        <position position="157"/>
    </location>
    <ligand>
        <name>AMP</name>
        <dbReference type="ChEBI" id="CHEBI:456215"/>
    </ligand>
</feature>
<feature type="binding site" evidence="1">
    <location>
        <position position="168"/>
    </location>
    <ligand>
        <name>AMP</name>
        <dbReference type="ChEBI" id="CHEBI:456215"/>
    </ligand>
</feature>
<feature type="binding site" evidence="1">
    <location>
        <position position="196"/>
    </location>
    <ligand>
        <name>ATP</name>
        <dbReference type="ChEBI" id="CHEBI:30616"/>
    </ligand>
</feature>
<dbReference type="EC" id="2.7.4.3" evidence="1"/>
<dbReference type="EMBL" id="AM946015">
    <property type="protein sequence ID" value="CAR40476.1"/>
    <property type="molecule type" value="Genomic_DNA"/>
</dbReference>
<dbReference type="RefSeq" id="WP_012657650.1">
    <property type="nucleotide sequence ID" value="NC_012004.1"/>
</dbReference>
<dbReference type="SMR" id="B9DSX1"/>
<dbReference type="STRING" id="218495.SUB0089"/>
<dbReference type="KEGG" id="sub:SUB0089"/>
<dbReference type="eggNOG" id="COG0563">
    <property type="taxonomic scope" value="Bacteria"/>
</dbReference>
<dbReference type="HOGENOM" id="CLU_032354_1_2_9"/>
<dbReference type="OrthoDB" id="9805030at2"/>
<dbReference type="UniPathway" id="UPA00588">
    <property type="reaction ID" value="UER00649"/>
</dbReference>
<dbReference type="Proteomes" id="UP000000449">
    <property type="component" value="Chromosome"/>
</dbReference>
<dbReference type="GO" id="GO:0005737">
    <property type="term" value="C:cytoplasm"/>
    <property type="evidence" value="ECO:0007669"/>
    <property type="project" value="UniProtKB-SubCell"/>
</dbReference>
<dbReference type="GO" id="GO:0004017">
    <property type="term" value="F:adenylate kinase activity"/>
    <property type="evidence" value="ECO:0007669"/>
    <property type="project" value="UniProtKB-UniRule"/>
</dbReference>
<dbReference type="GO" id="GO:0005524">
    <property type="term" value="F:ATP binding"/>
    <property type="evidence" value="ECO:0007669"/>
    <property type="project" value="UniProtKB-UniRule"/>
</dbReference>
<dbReference type="GO" id="GO:0044209">
    <property type="term" value="P:AMP salvage"/>
    <property type="evidence" value="ECO:0007669"/>
    <property type="project" value="UniProtKB-UniRule"/>
</dbReference>
<dbReference type="CDD" id="cd01428">
    <property type="entry name" value="ADK"/>
    <property type="match status" value="1"/>
</dbReference>
<dbReference type="FunFam" id="3.40.50.300:FF:000106">
    <property type="entry name" value="Adenylate kinase mitochondrial"/>
    <property type="match status" value="1"/>
</dbReference>
<dbReference type="Gene3D" id="3.40.50.300">
    <property type="entry name" value="P-loop containing nucleotide triphosphate hydrolases"/>
    <property type="match status" value="1"/>
</dbReference>
<dbReference type="HAMAP" id="MF_00235">
    <property type="entry name" value="Adenylate_kinase_Adk"/>
    <property type="match status" value="1"/>
</dbReference>
<dbReference type="InterPro" id="IPR006259">
    <property type="entry name" value="Adenyl_kin_sub"/>
</dbReference>
<dbReference type="InterPro" id="IPR000850">
    <property type="entry name" value="Adenylat/UMP-CMP_kin"/>
</dbReference>
<dbReference type="InterPro" id="IPR033690">
    <property type="entry name" value="Adenylat_kinase_CS"/>
</dbReference>
<dbReference type="InterPro" id="IPR036193">
    <property type="entry name" value="ADK_active_lid_dom_sf"/>
</dbReference>
<dbReference type="InterPro" id="IPR027417">
    <property type="entry name" value="P-loop_NTPase"/>
</dbReference>
<dbReference type="NCBIfam" id="TIGR01351">
    <property type="entry name" value="adk"/>
    <property type="match status" value="1"/>
</dbReference>
<dbReference type="NCBIfam" id="NF001380">
    <property type="entry name" value="PRK00279.1-2"/>
    <property type="match status" value="1"/>
</dbReference>
<dbReference type="NCBIfam" id="NF001381">
    <property type="entry name" value="PRK00279.1-3"/>
    <property type="match status" value="1"/>
</dbReference>
<dbReference type="NCBIfam" id="NF001382">
    <property type="entry name" value="PRK00279.1-4"/>
    <property type="match status" value="1"/>
</dbReference>
<dbReference type="NCBIfam" id="NF011100">
    <property type="entry name" value="PRK14527.1"/>
    <property type="match status" value="1"/>
</dbReference>
<dbReference type="PANTHER" id="PTHR23359">
    <property type="entry name" value="NUCLEOTIDE KINASE"/>
    <property type="match status" value="1"/>
</dbReference>
<dbReference type="Pfam" id="PF00406">
    <property type="entry name" value="ADK"/>
    <property type="match status" value="1"/>
</dbReference>
<dbReference type="PRINTS" id="PR00094">
    <property type="entry name" value="ADENYLTKNASE"/>
</dbReference>
<dbReference type="SUPFAM" id="SSF57774">
    <property type="entry name" value="Microbial and mitochondrial ADK, insert 'zinc finger' domain"/>
    <property type="match status" value="1"/>
</dbReference>
<dbReference type="SUPFAM" id="SSF52540">
    <property type="entry name" value="P-loop containing nucleoside triphosphate hydrolases"/>
    <property type="match status" value="1"/>
</dbReference>
<dbReference type="PROSITE" id="PS00113">
    <property type="entry name" value="ADENYLATE_KINASE"/>
    <property type="match status" value="1"/>
</dbReference>
<protein>
    <recommendedName>
        <fullName evidence="1">Adenylate kinase</fullName>
        <shortName evidence="1">AK</shortName>
        <ecNumber evidence="1">2.7.4.3</ecNumber>
    </recommendedName>
    <alternativeName>
        <fullName evidence="1">ATP-AMP transphosphorylase</fullName>
    </alternativeName>
    <alternativeName>
        <fullName evidence="1">ATP:AMP phosphotransferase</fullName>
    </alternativeName>
    <alternativeName>
        <fullName evidence="1">Adenylate monophosphate kinase</fullName>
    </alternativeName>
</protein>